<reference key="1">
    <citation type="journal article" date="2005" name="Nature">
        <title>Virology: independent virus development outside a host.</title>
        <authorList>
            <person name="Haring M."/>
            <person name="Vestergaard G."/>
            <person name="Rachel R."/>
            <person name="Chen L."/>
            <person name="Garrett R.A."/>
            <person name="Prangishvili D."/>
        </authorList>
    </citation>
    <scope>NUCLEOTIDE SEQUENCE [GENOMIC DNA]</scope>
</reference>
<organism>
    <name type="scientific">Acidianus two-tailed virus</name>
    <name type="common">ATV</name>
    <dbReference type="NCBI Taxonomy" id="315953"/>
    <lineage>
        <taxon>Viruses</taxon>
        <taxon>Viruses incertae sedis</taxon>
        <taxon>Bicaudaviridae</taxon>
        <taxon>Bicaudavirus</taxon>
    </lineage>
</organism>
<accession>Q3V4Q7</accession>
<organismHost>
    <name type="scientific">Acidianus convivator</name>
    <dbReference type="NCBI Taxonomy" id="269667"/>
</organismHost>
<keyword id="KW-1185">Reference proteome</keyword>
<feature type="chain" id="PRO_0000389057" description="Uncharacterized protein ORF213">
    <location>
        <begin position="1"/>
        <end position="213"/>
    </location>
</feature>
<protein>
    <recommendedName>
        <fullName>Uncharacterized protein ORF213</fullName>
    </recommendedName>
</protein>
<proteinExistence type="predicted"/>
<name>Y213_ATV</name>
<dbReference type="EMBL" id="AJ888457">
    <property type="protein sequence ID" value="CAI59907.1"/>
    <property type="molecule type" value="Genomic_DNA"/>
</dbReference>
<dbReference type="RefSeq" id="YP_319889.1">
    <property type="nucleotide sequence ID" value="NC_007409.1"/>
</dbReference>
<dbReference type="GeneID" id="4484263"/>
<dbReference type="KEGG" id="vg:4484263"/>
<dbReference type="Proteomes" id="UP000002150">
    <property type="component" value="Genome"/>
</dbReference>
<sequence length="213" mass="24974">MDEKRVYITMYIKFAQKVLSLLSLKYASQKSVETYLYMFLYFGLGLRRNVTTLSLSQFDAKNLRFYPRPYAIYNDSPLYMIVPRHLVDIIVLYTRRFKIGLDQPLFRDIERPSVYERKIFEITGILPQDLVNACIATMIEYSKNPKQVARLLYLNKVYLDFIVRKLGFKLTNDFKLMTADGRILEPSPEVLHPFLYLAKKTKQQQEQGAGSLA</sequence>